<reference key="1">
    <citation type="journal article" date="1995" name="Yeast">
        <title>Sequence analysis of a 78.6 kb segment of the left end of Saccharomyces cerevisiae chromosome II.</title>
        <authorList>
            <person name="Obermaier B."/>
            <person name="Gassenhuber J."/>
            <person name="Piravandi E."/>
            <person name="Domdey H."/>
        </authorList>
    </citation>
    <scope>NUCLEOTIDE SEQUENCE [GENOMIC DNA]</scope>
    <source>
        <strain>ATCC 204508 / S288c</strain>
    </source>
</reference>
<reference key="2">
    <citation type="journal article" date="1994" name="EMBO J.">
        <title>Complete DNA sequence of yeast chromosome II.</title>
        <authorList>
            <person name="Feldmann H."/>
            <person name="Aigle M."/>
            <person name="Aljinovic G."/>
            <person name="Andre B."/>
            <person name="Baclet M.C."/>
            <person name="Barthe C."/>
            <person name="Baur A."/>
            <person name="Becam A.-M."/>
            <person name="Biteau N."/>
            <person name="Boles E."/>
            <person name="Brandt T."/>
            <person name="Brendel M."/>
            <person name="Brueckner M."/>
            <person name="Bussereau F."/>
            <person name="Christiansen C."/>
            <person name="Contreras R."/>
            <person name="Crouzet M."/>
            <person name="Cziepluch C."/>
            <person name="Demolis N."/>
            <person name="Delaveau T."/>
            <person name="Doignon F."/>
            <person name="Domdey H."/>
            <person name="Duesterhus S."/>
            <person name="Dubois E."/>
            <person name="Dujon B."/>
            <person name="El Bakkoury M."/>
            <person name="Entian K.-D."/>
            <person name="Feuermann M."/>
            <person name="Fiers W."/>
            <person name="Fobo G.M."/>
            <person name="Fritz C."/>
            <person name="Gassenhuber J."/>
            <person name="Glansdorff N."/>
            <person name="Goffeau A."/>
            <person name="Grivell L.A."/>
            <person name="de Haan M."/>
            <person name="Hein C."/>
            <person name="Herbert C.J."/>
            <person name="Hollenberg C.P."/>
            <person name="Holmstroem K."/>
            <person name="Jacq C."/>
            <person name="Jacquet M."/>
            <person name="Jauniaux J.-C."/>
            <person name="Jonniaux J.-L."/>
            <person name="Kallesoee T."/>
            <person name="Kiesau P."/>
            <person name="Kirchrath L."/>
            <person name="Koetter P."/>
            <person name="Korol S."/>
            <person name="Liebl S."/>
            <person name="Logghe M."/>
            <person name="Lohan A.J.E."/>
            <person name="Louis E.J."/>
            <person name="Li Z.Y."/>
            <person name="Maat M.J."/>
            <person name="Mallet L."/>
            <person name="Mannhaupt G."/>
            <person name="Messenguy F."/>
            <person name="Miosga T."/>
            <person name="Molemans F."/>
            <person name="Mueller S."/>
            <person name="Nasr F."/>
            <person name="Obermaier B."/>
            <person name="Perea J."/>
            <person name="Pierard A."/>
            <person name="Piravandi E."/>
            <person name="Pohl F.M."/>
            <person name="Pohl T.M."/>
            <person name="Potier S."/>
            <person name="Proft M."/>
            <person name="Purnelle B."/>
            <person name="Ramezani Rad M."/>
            <person name="Rieger M."/>
            <person name="Rose M."/>
            <person name="Schaaff-Gerstenschlaeger I."/>
            <person name="Scherens B."/>
            <person name="Schwarzlose C."/>
            <person name="Skala J."/>
            <person name="Slonimski P.P."/>
            <person name="Smits P.H.M."/>
            <person name="Souciet J.-L."/>
            <person name="Steensma H.Y."/>
            <person name="Stucka R."/>
            <person name="Urrestarazu L.A."/>
            <person name="van der Aart Q.J.M."/>
            <person name="Van Dyck L."/>
            <person name="Vassarotti A."/>
            <person name="Vetter I."/>
            <person name="Vierendeels F."/>
            <person name="Vissers S."/>
            <person name="Wagner G."/>
            <person name="de Wergifosse P."/>
            <person name="Wolfe K.H."/>
            <person name="Zagulski M."/>
            <person name="Zimmermann F.K."/>
            <person name="Mewes H.-W."/>
            <person name="Kleine K."/>
        </authorList>
    </citation>
    <scope>NUCLEOTIDE SEQUENCE [LARGE SCALE GENOMIC DNA]</scope>
    <source>
        <strain>ATCC 204508 / S288c</strain>
    </source>
</reference>
<reference key="3">
    <citation type="journal article" date="2014" name="G3 (Bethesda)">
        <title>The reference genome sequence of Saccharomyces cerevisiae: Then and now.</title>
        <authorList>
            <person name="Engel S.R."/>
            <person name="Dietrich F.S."/>
            <person name="Fisk D.G."/>
            <person name="Binkley G."/>
            <person name="Balakrishnan R."/>
            <person name="Costanzo M.C."/>
            <person name="Dwight S.S."/>
            <person name="Hitz B.C."/>
            <person name="Karra K."/>
            <person name="Nash R.S."/>
            <person name="Weng S."/>
            <person name="Wong E.D."/>
            <person name="Lloyd P."/>
            <person name="Skrzypek M.S."/>
            <person name="Miyasato S.R."/>
            <person name="Simison M."/>
            <person name="Cherry J.M."/>
        </authorList>
    </citation>
    <scope>GENOME REANNOTATION</scope>
    <scope>SEQUENCE REVISION TO 130; 135; 260; 834; 858 AND 943</scope>
    <source>
        <strain>ATCC 204508 / S288c</strain>
    </source>
</reference>
<reference key="4">
    <citation type="journal article" date="1998" name="Genetics">
        <title>Sro7p, a Saccharomyces cerevisiae counterpart of the tumor suppressor l(2)gl protein, is related to myosins in function.</title>
        <authorList>
            <person name="Kagami M."/>
            <person name="Toh-e A."/>
            <person name="Matsui Y."/>
        </authorList>
    </citation>
    <scope>CHARACTERIZATION</scope>
</reference>
<reference key="5">
    <citation type="journal article" date="1999" name="J. Cell Biol.">
        <title>Yeast homologues of tomosyn and lethal giant larvae function in exocytosis and are associated with the plasma membrane SNARE, Sec9.</title>
        <authorList>
            <person name="Lehman K."/>
            <person name="Rossi G."/>
            <person name="Adamo J.E."/>
            <person name="Brennwald P."/>
        </authorList>
    </citation>
    <scope>FUNCTION</scope>
    <scope>INTERACTION WITH SEC9</scope>
</reference>
<reference key="6">
    <citation type="journal article" date="1998" name="J. Biol. Chem.">
        <title>The Saccharomyces cerevisiae SOP1 and SOP2 genes, which act in cation homeostasis, can be functionally substituted by the Drosophila lethal(2)giant larvae tumor suppressor gene.</title>
        <authorList>
            <person name="Larsson K."/>
            <person name="Bohl F."/>
            <person name="Sjostrom I."/>
            <person name="Akhtar N."/>
            <person name="Strand D."/>
            <person name="Mechler B.M."/>
            <person name="Grabowski R."/>
            <person name="Adler L."/>
        </authorList>
    </citation>
    <scope>FUNCTION</scope>
</reference>
<sequence>MFKKSRHLKNVSNAIKSARVHDVSNGINSKFFDTKKICTYGINGRITVTTFDYTQSLLAVATTAGEIHVYGQKQIEVVFTLKNRPQIKHMRFIKGIYLIAVDEKSNIIVLSVHSKQILTTVFCPNSITCIETDPSLDWMLIGLESGSILIYDVDRNQMSKLKIENFQKSVFLPKERLSPVISIQWNPRDIGTILISYEHITVIYSFIDYKVKQHFFYQLEPYAPGGDLSTNIEKKRTPKVIQSLYHPNSLHILTVHEDNSLVFWDVNSGKLIHARSIFETHVNFPNPALKDCSFTETPAIFKVSWLCQRNPEYTSLLIATKATENPCLPQEITMIDLGGTPMYSVTSFDAMSKYYAKPVQQKLFSLIGKAPLINFLPLPKASPYFGGCHDTNLILLLLEDGELETLIYPAGSFSSKASIFPRSLAWVRPTVTTCIAQSVQKNLWLGMMTIAQSESFLKGGIPATRNIRRHETRSALLTGHSNGSVRIWDASHSEVTDNAVFEVNTAKVLNRATNLAIKNISFASETLELAVSSEVGDVILFKFETNKFYGQLPKSDALQLKFSRFSLDDSKTILVDVSDRGPTNVKQGFIPSTVIHAKKGAVSAIMNSNIGFVAVGFIEGTLIILDRRGPAIIFNENIRVISKAGSSYVSTVHFCVMEYGDDGFSSILMLCGTDIGELMTFKILPATNGRFEVKFTDATKTNNQGKILGINSFAKDTGYSCSATISKMQGLSKGIAIPGFVTISGANDIRLVSPGKSKDTHALFKYPIATSGLSFIPIIDGKGERKLSTIMIVLLINGDIKVLTVPELKEVKNLRCPVPLSAQYVENSSILENGDIVIRTGKFQASLISVLNESATGTNHTADISQHTPIDTLYNPDLKIGYRPQVNSLQWARGTIYCTPYQLDELLGGIERPESKYEESAIARGCISSSSSNAARKLPPGTEDHRYARPVRSSGRSNGYGVLKSVSRAIETRLDTVETTINDYATTMGQTMNDAMEETGRDMMKSAVGF</sequence>
<comment type="function">
    <text evidence="2 3">Acts as an allosteric regulator of polarized exocytosis by promoting the targeted fusion of vesicles with the plasma membrane. Involved in maintenance of ion homeostasis in cells exposed to NaCl stress. May be involved in the targeting of the myosin proteins to their intrinsic pathways. Multicopy suppressor of RHO3. May also participate in the maintenance of cell polarity and bud growth.</text>
</comment>
<comment type="subunit">
    <text evidence="2">Interacts with SEC9.</text>
</comment>
<comment type="similarity">
    <text evidence="4">Belongs to the WD repeat L(2)GL family.</text>
</comment>
<feature type="chain" id="PRO_0000051221" description="Lethal(2) giant larvae protein homolog SRO77">
    <location>
        <begin position="1"/>
        <end position="1010"/>
    </location>
</feature>
<feature type="repeat" description="WD 1">
    <location>
        <begin position="47"/>
        <end position="80"/>
    </location>
</feature>
<feature type="repeat" description="WD 2">
    <location>
        <begin position="87"/>
        <end position="122"/>
    </location>
</feature>
<feature type="repeat" description="WD 3">
    <location>
        <begin position="127"/>
        <end position="163"/>
    </location>
</feature>
<feature type="repeat" description="WD 4">
    <location>
        <begin position="182"/>
        <end position="215"/>
    </location>
</feature>
<feature type="repeat" description="WD 5">
    <location>
        <begin position="240"/>
        <end position="275"/>
    </location>
</feature>
<feature type="repeat" description="WD 6">
    <location>
        <begin position="299"/>
        <end position="364"/>
    </location>
</feature>
<feature type="repeat" description="WD 7">
    <location>
        <begin position="372"/>
        <end position="407"/>
    </location>
</feature>
<feature type="repeat" description="WD 8">
    <location>
        <begin position="431"/>
        <end position="504"/>
    </location>
</feature>
<feature type="repeat" description="WD 9">
    <location>
        <begin position="518"/>
        <end position="595"/>
    </location>
</feature>
<feature type="repeat" description="WD 10">
    <location>
        <begin position="602"/>
        <end position="637"/>
    </location>
</feature>
<feature type="repeat" description="WD 11">
    <location>
        <begin position="649"/>
        <end position="700"/>
    </location>
</feature>
<feature type="repeat" description="WD 12">
    <location>
        <begin position="709"/>
        <end position="763"/>
    </location>
</feature>
<feature type="repeat" description="WD 13">
    <location>
        <begin position="768"/>
        <end position="815"/>
    </location>
</feature>
<feature type="repeat" description="WD 14">
    <location>
        <begin position="829"/>
        <end position="852"/>
    </location>
</feature>
<feature type="region of interest" description="Disordered" evidence="1">
    <location>
        <begin position="932"/>
        <end position="958"/>
    </location>
</feature>
<feature type="sequence conflict" description="In Ref. 1; CAA55989 and 2; CAA84933." evidence="4" ref="1 2">
    <original>I</original>
    <variation>F</variation>
    <location>
        <position position="130"/>
    </location>
</feature>
<feature type="sequence conflict" description="In Ref. 1; CAA55989 and 2; CAA84933." evidence="4" ref="1 2">
    <original>S</original>
    <variation>P</variation>
    <location>
        <position position="135"/>
    </location>
</feature>
<feature type="sequence conflict" description="In Ref. 1; CAA55989 and 2; CAA84933." evidence="4" ref="1 2">
    <original>S</original>
    <variation>A</variation>
    <location>
        <position position="260"/>
    </location>
</feature>
<feature type="sequence conflict" description="In Ref. 1; CAA55989 and 2; CAA84933." evidence="4" ref="1 2">
    <original>G</original>
    <variation>V</variation>
    <location>
        <position position="834"/>
    </location>
</feature>
<feature type="sequence conflict" description="In Ref. 1; CAA55989 and 2; CAA84933." evidence="4" ref="1 2">
    <original>T</original>
    <variation>S</variation>
    <location>
        <position position="858"/>
    </location>
</feature>
<feature type="sequence conflict" description="In Ref. 1; CAA55989 and 2; CAA84933." evidence="4" ref="1 2">
    <original>E</original>
    <variation>K</variation>
    <location>
        <position position="943"/>
    </location>
</feature>
<dbReference type="EMBL" id="X79489">
    <property type="protein sequence ID" value="CAA55989.1"/>
    <property type="molecule type" value="Genomic_DNA"/>
</dbReference>
<dbReference type="EMBL" id="Z35867">
    <property type="protein sequence ID" value="CAA84933.1"/>
    <property type="molecule type" value="Genomic_DNA"/>
</dbReference>
<dbReference type="EMBL" id="BK006936">
    <property type="protein sequence ID" value="DAA07017.2"/>
    <property type="molecule type" value="Genomic_DNA"/>
</dbReference>
<dbReference type="PIR" id="S45389">
    <property type="entry name" value="S45389"/>
</dbReference>
<dbReference type="RefSeq" id="NP_009444.2">
    <property type="nucleotide sequence ID" value="NM_001178346.2"/>
</dbReference>
<dbReference type="SMR" id="P38163"/>
<dbReference type="BioGRID" id="32597">
    <property type="interactions" value="86"/>
</dbReference>
<dbReference type="DIP" id="DIP-2947N"/>
<dbReference type="FunCoup" id="P38163">
    <property type="interactions" value="50"/>
</dbReference>
<dbReference type="IntAct" id="P38163">
    <property type="interactions" value="11"/>
</dbReference>
<dbReference type="MINT" id="P38163"/>
<dbReference type="STRING" id="4932.YBL106C"/>
<dbReference type="iPTMnet" id="P38163"/>
<dbReference type="PaxDb" id="4932-YBL106C"/>
<dbReference type="PeptideAtlas" id="P38163"/>
<dbReference type="EnsemblFungi" id="YBL106C_mRNA">
    <property type="protein sequence ID" value="YBL106C"/>
    <property type="gene ID" value="YBL106C"/>
</dbReference>
<dbReference type="GeneID" id="852168"/>
<dbReference type="KEGG" id="sce:YBL106C"/>
<dbReference type="AGR" id="SGD:S000000202"/>
<dbReference type="SGD" id="S000000202">
    <property type="gene designation" value="SRO77"/>
</dbReference>
<dbReference type="VEuPathDB" id="FungiDB:YBL106C"/>
<dbReference type="eggNOG" id="KOG1983">
    <property type="taxonomic scope" value="Eukaryota"/>
</dbReference>
<dbReference type="GeneTree" id="ENSGT00950000182906"/>
<dbReference type="HOGENOM" id="CLU_006030_0_0_1"/>
<dbReference type="InParanoid" id="P38163"/>
<dbReference type="OMA" id="ATENPCL"/>
<dbReference type="OrthoDB" id="19944at2759"/>
<dbReference type="BioCyc" id="YEAST:G3O-28990-MONOMER"/>
<dbReference type="BioGRID-ORCS" id="852168">
    <property type="hits" value="0 hits in 10 CRISPR screens"/>
</dbReference>
<dbReference type="PRO" id="PR:P38163"/>
<dbReference type="Proteomes" id="UP000002311">
    <property type="component" value="Chromosome II"/>
</dbReference>
<dbReference type="RNAct" id="P38163">
    <property type="molecule type" value="protein"/>
</dbReference>
<dbReference type="GO" id="GO:0005935">
    <property type="term" value="C:cellular bud neck"/>
    <property type="evidence" value="ECO:0007005"/>
    <property type="project" value="SGD"/>
</dbReference>
<dbReference type="GO" id="GO:0005737">
    <property type="term" value="C:cytoplasm"/>
    <property type="evidence" value="ECO:0000318"/>
    <property type="project" value="GO_Central"/>
</dbReference>
<dbReference type="GO" id="GO:0005886">
    <property type="term" value="C:plasma membrane"/>
    <property type="evidence" value="ECO:0000353"/>
    <property type="project" value="SGD"/>
</dbReference>
<dbReference type="GO" id="GO:0005096">
    <property type="term" value="F:GTPase activator activity"/>
    <property type="evidence" value="ECO:0000318"/>
    <property type="project" value="GO_Central"/>
</dbReference>
<dbReference type="GO" id="GO:0045159">
    <property type="term" value="F:myosin II binding"/>
    <property type="evidence" value="ECO:0000318"/>
    <property type="project" value="GO_Central"/>
</dbReference>
<dbReference type="GO" id="GO:0019905">
    <property type="term" value="F:syntaxin binding"/>
    <property type="evidence" value="ECO:0000318"/>
    <property type="project" value="GO_Central"/>
</dbReference>
<dbReference type="GO" id="GO:0006887">
    <property type="term" value="P:exocytosis"/>
    <property type="evidence" value="ECO:0000316"/>
    <property type="project" value="SGD"/>
</dbReference>
<dbReference type="GO" id="GO:0006893">
    <property type="term" value="P:Golgi to plasma membrane transport"/>
    <property type="evidence" value="ECO:0000316"/>
    <property type="project" value="SGD"/>
</dbReference>
<dbReference type="FunFam" id="2.130.10.10:FF:000911">
    <property type="entry name" value="Putative Rab GTPase-binding protein"/>
    <property type="match status" value="1"/>
</dbReference>
<dbReference type="Gene3D" id="2.130.10.10">
    <property type="entry name" value="YVTN repeat-like/Quinoprotein amine dehydrogenase"/>
    <property type="match status" value="2"/>
</dbReference>
<dbReference type="InterPro" id="IPR013905">
    <property type="entry name" value="Lgl_C_dom"/>
</dbReference>
<dbReference type="InterPro" id="IPR015943">
    <property type="entry name" value="WD40/YVTN_repeat-like_dom_sf"/>
</dbReference>
<dbReference type="InterPro" id="IPR036322">
    <property type="entry name" value="WD40_repeat_dom_sf"/>
</dbReference>
<dbReference type="InterPro" id="IPR001680">
    <property type="entry name" value="WD40_rpt"/>
</dbReference>
<dbReference type="PANTHER" id="PTHR10241">
    <property type="entry name" value="LETHAL 2 GIANT LARVAE PROTEIN"/>
    <property type="match status" value="1"/>
</dbReference>
<dbReference type="PANTHER" id="PTHR10241:SF25">
    <property type="entry name" value="TOMOSYN, ISOFORM C"/>
    <property type="match status" value="1"/>
</dbReference>
<dbReference type="Pfam" id="PF08596">
    <property type="entry name" value="Lgl_C"/>
    <property type="match status" value="1"/>
</dbReference>
<dbReference type="SMART" id="SM00320">
    <property type="entry name" value="WD40"/>
    <property type="match status" value="5"/>
</dbReference>
<dbReference type="SUPFAM" id="SSF50978">
    <property type="entry name" value="WD40 repeat-like"/>
    <property type="match status" value="2"/>
</dbReference>
<dbReference type="PROSITE" id="PS00678">
    <property type="entry name" value="WD_REPEATS_1"/>
    <property type="match status" value="2"/>
</dbReference>
<dbReference type="PROSITE" id="PS50082">
    <property type="entry name" value="WD_REPEATS_2"/>
    <property type="match status" value="2"/>
</dbReference>
<dbReference type="PROSITE" id="PS50294">
    <property type="entry name" value="WD_REPEATS_REGION"/>
    <property type="match status" value="2"/>
</dbReference>
<evidence type="ECO:0000256" key="1">
    <source>
        <dbReference type="SAM" id="MobiDB-lite"/>
    </source>
</evidence>
<evidence type="ECO:0000269" key="2">
    <source>
    </source>
</evidence>
<evidence type="ECO:0000269" key="3">
    <source>
    </source>
</evidence>
<evidence type="ECO:0000305" key="4"/>
<name>SRO77_YEAST</name>
<protein>
    <recommendedName>
        <fullName>Lethal(2) giant larvae protein homolog SRO77</fullName>
    </recommendedName>
    <alternativeName>
        <fullName>Sodium protection protein 2</fullName>
    </alternativeName>
    <alternativeName>
        <fullName>Suppressor of RHO3 protein 77</fullName>
    </alternativeName>
</protein>
<keyword id="KW-0268">Exocytosis</keyword>
<keyword id="KW-1185">Reference proteome</keyword>
<keyword id="KW-0677">Repeat</keyword>
<keyword id="KW-0853">WD repeat</keyword>
<accession>P38163</accession>
<accession>D6VPP7</accession>
<proteinExistence type="evidence at protein level"/>
<organism>
    <name type="scientific">Saccharomyces cerevisiae (strain ATCC 204508 / S288c)</name>
    <name type="common">Baker's yeast</name>
    <dbReference type="NCBI Taxonomy" id="559292"/>
    <lineage>
        <taxon>Eukaryota</taxon>
        <taxon>Fungi</taxon>
        <taxon>Dikarya</taxon>
        <taxon>Ascomycota</taxon>
        <taxon>Saccharomycotina</taxon>
        <taxon>Saccharomycetes</taxon>
        <taxon>Saccharomycetales</taxon>
        <taxon>Saccharomycetaceae</taxon>
        <taxon>Saccharomyces</taxon>
    </lineage>
</organism>
<gene>
    <name type="primary">SRO77</name>
    <name type="synonym">SNI2</name>
    <name type="synonym">SOP2</name>
    <name type="ordered locus">YBL106C</name>
    <name type="ORF">YBL0806</name>
</gene>